<name>LDT1_MYCTU</name>
<sequence length="251" mass="26916">MRRVVRYLSVVVAITLMLTAESVSIATAAVPPLQPIPGVASVSPANGAVVGVAHPVVVTFTTPVTDRRAVERSIRISTPHNTTGHFEWVASNVVRWVPHRYWPPHTRVSVGVQELTEGFETGDALIGVASISAHTFTVSRNGEVLRTMPASLGKPSRPTPIGSFHAMSKERTVVMDSRTIGIPLNSSDGYLLTAHYAVRVTWSGVYVHSAPWSVNSQGYANVSHGCINLSPDNAAWYFDAVTVGDPIEVVG</sequence>
<feature type="signal peptide" evidence="2">
    <location>
        <begin position="1"/>
        <end position="28"/>
    </location>
</feature>
<feature type="chain" id="PRO_0000430332" description="L,D-transpeptidase 1">
    <location>
        <begin position="29"/>
        <end position="251"/>
    </location>
</feature>
<feature type="domain" description="L,D-TPase catalytic" evidence="3">
    <location>
        <begin position="125"/>
        <end position="250"/>
    </location>
</feature>
<feature type="active site" description="Proton donor/acceptor" evidence="3 12">
    <location>
        <position position="208"/>
    </location>
</feature>
<feature type="active site" description="Nucleophile" evidence="3 7">
    <location>
        <position position="226"/>
    </location>
</feature>
<feature type="binding site" evidence="1">
    <location>
        <position position="190"/>
    </location>
    <ligand>
        <name>substrate</name>
    </ligand>
</feature>
<feature type="binding site" evidence="1">
    <location>
        <begin position="203"/>
        <end position="204"/>
    </location>
    <ligand>
        <name>substrate</name>
    </ligand>
</feature>
<feature type="binding site" evidence="9 14">
    <location>
        <position position="208"/>
    </location>
    <ligand>
        <name>imipenem</name>
        <dbReference type="ChEBI" id="CHEBI:190509"/>
        <note>inhibitor</note>
    </ligand>
</feature>
<feature type="binding site" evidence="9 14">
    <location>
        <position position="224"/>
    </location>
    <ligand>
        <name>imipenem</name>
        <dbReference type="ChEBI" id="CHEBI:190509"/>
        <note>inhibitor</note>
    </ligand>
</feature>
<feature type="binding site" description="covalent" evidence="9 14">
    <location>
        <position position="226"/>
    </location>
    <ligand>
        <name>imipenem</name>
        <dbReference type="ChEBI" id="CHEBI:190509"/>
        <note>inhibitor</note>
    </ligand>
</feature>
<feature type="binding site" evidence="9 14">
    <location>
        <position position="228"/>
    </location>
    <ligand>
        <name>imipenem</name>
        <dbReference type="ChEBI" id="CHEBI:190509"/>
        <note>inhibitor</note>
    </ligand>
</feature>
<feature type="binding site" evidence="1">
    <location>
        <position position="228"/>
    </location>
    <ligand>
        <name>substrate</name>
    </ligand>
</feature>
<feature type="strand" evidence="17">
    <location>
        <begin position="39"/>
        <end position="41"/>
    </location>
</feature>
<feature type="strand" evidence="17">
    <location>
        <begin position="56"/>
        <end position="58"/>
    </location>
</feature>
<feature type="helix" evidence="17">
    <location>
        <begin position="67"/>
        <end position="72"/>
    </location>
</feature>
<feature type="strand" evidence="17">
    <location>
        <begin position="74"/>
        <end position="77"/>
    </location>
</feature>
<feature type="strand" evidence="17">
    <location>
        <begin position="84"/>
        <end position="87"/>
    </location>
</feature>
<feature type="strand" evidence="17">
    <location>
        <begin position="94"/>
        <end position="100"/>
    </location>
</feature>
<feature type="strand" evidence="17">
    <location>
        <begin position="107"/>
        <end position="112"/>
    </location>
</feature>
<feature type="strand" evidence="17">
    <location>
        <begin position="115"/>
        <end position="121"/>
    </location>
</feature>
<feature type="strand" evidence="17">
    <location>
        <begin position="125"/>
        <end position="130"/>
    </location>
</feature>
<feature type="turn" evidence="17">
    <location>
        <begin position="131"/>
        <end position="134"/>
    </location>
</feature>
<feature type="strand" evidence="17">
    <location>
        <begin position="135"/>
        <end position="149"/>
    </location>
</feature>
<feature type="strand" evidence="17">
    <location>
        <begin position="151"/>
        <end position="154"/>
    </location>
</feature>
<feature type="strand" evidence="17">
    <location>
        <begin position="162"/>
        <end position="165"/>
    </location>
</feature>
<feature type="strand" evidence="17">
    <location>
        <begin position="168"/>
        <end position="176"/>
    </location>
</feature>
<feature type="helix" evidence="17">
    <location>
        <begin position="177"/>
        <end position="180"/>
    </location>
</feature>
<feature type="strand" evidence="16">
    <location>
        <begin position="184"/>
        <end position="186"/>
    </location>
</feature>
<feature type="strand" evidence="17">
    <location>
        <begin position="191"/>
        <end position="199"/>
    </location>
</feature>
<feature type="strand" evidence="17">
    <location>
        <begin position="206"/>
        <end position="209"/>
    </location>
</feature>
<feature type="helix" evidence="15">
    <location>
        <begin position="211"/>
        <end position="213"/>
    </location>
</feature>
<feature type="turn" evidence="15">
    <location>
        <begin position="214"/>
        <end position="219"/>
    </location>
</feature>
<feature type="strand" evidence="15">
    <location>
        <begin position="223"/>
        <end position="229"/>
    </location>
</feature>
<feature type="helix" evidence="17">
    <location>
        <begin position="231"/>
        <end position="240"/>
    </location>
</feature>
<feature type="strand" evidence="17">
    <location>
        <begin position="246"/>
        <end position="250"/>
    </location>
</feature>
<reference key="1">
    <citation type="journal article" date="1998" name="Nature">
        <title>Deciphering the biology of Mycobacterium tuberculosis from the complete genome sequence.</title>
        <authorList>
            <person name="Cole S.T."/>
            <person name="Brosch R."/>
            <person name="Parkhill J."/>
            <person name="Garnier T."/>
            <person name="Churcher C.M."/>
            <person name="Harris D.E."/>
            <person name="Gordon S.V."/>
            <person name="Eiglmeier K."/>
            <person name="Gas S."/>
            <person name="Barry C.E. III"/>
            <person name="Tekaia F."/>
            <person name="Badcock K."/>
            <person name="Basham D."/>
            <person name="Brown D."/>
            <person name="Chillingworth T."/>
            <person name="Connor R."/>
            <person name="Davies R.M."/>
            <person name="Devlin K."/>
            <person name="Feltwell T."/>
            <person name="Gentles S."/>
            <person name="Hamlin N."/>
            <person name="Holroyd S."/>
            <person name="Hornsby T."/>
            <person name="Jagels K."/>
            <person name="Krogh A."/>
            <person name="McLean J."/>
            <person name="Moule S."/>
            <person name="Murphy L.D."/>
            <person name="Oliver S."/>
            <person name="Osborne J."/>
            <person name="Quail M.A."/>
            <person name="Rajandream M.A."/>
            <person name="Rogers J."/>
            <person name="Rutter S."/>
            <person name="Seeger K."/>
            <person name="Skelton S."/>
            <person name="Squares S."/>
            <person name="Squares R."/>
            <person name="Sulston J.E."/>
            <person name="Taylor K."/>
            <person name="Whitehead S."/>
            <person name="Barrell B.G."/>
        </authorList>
    </citation>
    <scope>NUCLEOTIDE SEQUENCE [LARGE SCALE GENOMIC DNA]</scope>
    <source>
        <strain>ATCC 25618 / H37Rv</strain>
    </source>
</reference>
<reference key="2">
    <citation type="submission" date="2013-11" db="EMBL/GenBank/DDBJ databases">
        <title>The genome sequence of Mycobacterium tuberculosis H37Rv.</title>
        <authorList>
            <consortium name="The Broad Institute Genome Sequencing Platform"/>
            <person name="Galagan J."/>
            <person name="Kreiswirth B."/>
            <person name="Dobos K."/>
            <person name="Fortune S."/>
            <person name="Fitzgerald M."/>
            <person name="Young S.K."/>
            <person name="Zeng Q."/>
            <person name="Gargeya S."/>
            <person name="Abouelleil A."/>
            <person name="Alvarado L."/>
            <person name="Berlin A.M."/>
            <person name="Chapman S.B."/>
            <person name="Gainer-Dewar J."/>
            <person name="Goldberg J."/>
            <person name="Gnerre S."/>
            <person name="Griggs A."/>
            <person name="Gujja S."/>
            <person name="Hansen M."/>
            <person name="Howarth C."/>
            <person name="Imamovic A."/>
            <person name="Larimer J."/>
            <person name="McCowan C."/>
            <person name="Murphy C."/>
            <person name="Pearson M."/>
            <person name="Poon T."/>
            <person name="Priest M."/>
            <person name="Roberts A."/>
            <person name="Saif S."/>
            <person name="Shea T."/>
            <person name="Sykes S."/>
            <person name="Wortman J."/>
            <person name="Nusbaum C."/>
            <person name="Birren B."/>
        </authorList>
    </citation>
    <scope>NUCLEOTIDE SEQUENCE [LARGE SCALE GENOMIC DNA]</scope>
    <source>
        <strain>ATCC 25618 / H37Rv</strain>
    </source>
</reference>
<reference key="3">
    <citation type="submission" date="2014-04" db="EMBL/GenBank/DDBJ databases">
        <title>The genome sequence of Mycobacterium tuberculosis H37Rv.</title>
        <authorList>
            <consortium name="The Broad Institute Genomics Platform"/>
            <consortium name="The Broad Institute Genome Sequencing Center for Infectious Disease"/>
            <person name="Earl A.M."/>
            <person name="Kreiswirth B."/>
            <person name="Gomez J."/>
            <person name="Victor T."/>
            <person name="Desjardins C."/>
            <person name="Abeel T."/>
            <person name="Young S."/>
            <person name="Zeng Q."/>
            <person name="Gargeya S."/>
            <person name="Abouelleil A."/>
            <person name="Alvarado L."/>
            <person name="Chapman S.B."/>
            <person name="Gainer-Dewar J."/>
            <person name="Goldberg J."/>
            <person name="Griggs A."/>
            <person name="Gujja S."/>
            <person name="Hansen M."/>
            <person name="Howarth C."/>
            <person name="Imamovic A."/>
            <person name="Larimer J."/>
            <person name="Murphy C."/>
            <person name="Naylor J."/>
            <person name="Pearson M."/>
            <person name="Poon T.W."/>
            <person name="Priest M."/>
            <person name="Roberts A."/>
            <person name="Saif S."/>
            <person name="Shea T."/>
            <person name="Sykes S."/>
            <person name="Wortman J."/>
            <person name="Nusbaum C."/>
            <person name="Birren B."/>
        </authorList>
    </citation>
    <scope>NUCLEOTIDE SEQUENCE [LARGE SCALE GENOMIC DNA]</scope>
    <source>
        <strain>ATCC 25618 / H37Rv</strain>
    </source>
</reference>
<reference key="4">
    <citation type="journal article" date="2002" name="Mol. Microbiol.">
        <title>Evaluation of a nutrient starvation model of Mycobacterium tuberculosis persistence by gene and protein expression profiling.</title>
        <authorList>
            <person name="Betts J.C."/>
            <person name="Lukey P.T."/>
            <person name="Robb L.C."/>
            <person name="McAdam R.A."/>
            <person name="Duncan K."/>
        </authorList>
    </citation>
    <scope>INDUCTION BY STARVATION</scope>
    <scope>IDENTIFICATION BY MASS SPECTROMETRY</scope>
    <source>
        <strain>ATCC 25618 / H37Rv</strain>
    </source>
</reference>
<reference key="5">
    <citation type="journal article" date="2008" name="J. Bacteriol.">
        <title>The peptidoglycan of stationary-phase Mycobacterium tuberculosis predominantly contains cross-links generated by L,D-transpeptidation.</title>
        <authorList>
            <person name="Lavollay M."/>
            <person name="Arthur M."/>
            <person name="Fourgeaud M."/>
            <person name="Dubost L."/>
            <person name="Marie A."/>
            <person name="Veziris N."/>
            <person name="Blanot D."/>
            <person name="Gutmann L."/>
            <person name="Mainardi J.L."/>
        </authorList>
    </citation>
    <scope>FUNCTION</scope>
    <scope>CATALYTIC ACTIVITY</scope>
    <scope>SUBSTRATE SPECIFICITY</scope>
    <scope>ACTIVITY REGULATION</scope>
    <source>
        <strain>ATCC 25618 / H37Rv</strain>
    </source>
</reference>
<reference key="6">
    <citation type="journal article" date="2011" name="Mol. Cell. Proteomics">
        <title>Proteogenomic analysis of Mycobacterium tuberculosis by high resolution mass spectrometry.</title>
        <authorList>
            <person name="Kelkar D.S."/>
            <person name="Kumar D."/>
            <person name="Kumar P."/>
            <person name="Balakrishnan L."/>
            <person name="Muthusamy B."/>
            <person name="Yadav A.K."/>
            <person name="Shrivastava P."/>
            <person name="Marimuthu A."/>
            <person name="Anand S."/>
            <person name="Sundaram H."/>
            <person name="Kingsbury R."/>
            <person name="Harsha H.C."/>
            <person name="Nair B."/>
            <person name="Prasad T.S."/>
            <person name="Chauhan D.S."/>
            <person name="Katoch K."/>
            <person name="Katoch V.M."/>
            <person name="Kumar P."/>
            <person name="Chaerkady R."/>
            <person name="Ramachandran S."/>
            <person name="Dash D."/>
            <person name="Pandey A."/>
        </authorList>
    </citation>
    <scope>IDENTIFICATION BY MASS SPECTROMETRY [LARGE SCALE ANALYSIS]</scope>
    <source>
        <strain>ATCC 25618 / H37Rv</strain>
    </source>
</reference>
<reference key="7">
    <citation type="journal article" date="2012" name="Antimicrob. Agents Chemother.">
        <title>Inactivation of Mycobacterium tuberculosis l,d-transpeptidase LdtMt(1) by carbapenems and cephalosporins.</title>
        <authorList>
            <person name="Dubee V."/>
            <person name="Triboulet S."/>
            <person name="Mainardi J.L."/>
            <person name="Etheve-Quelquejeu M."/>
            <person name="Gutmann L."/>
            <person name="Marie A."/>
            <person name="Dubost L."/>
            <person name="Hugonnet J.E."/>
            <person name="Arthur M."/>
        </authorList>
    </citation>
    <scope>ACTIVITY REGULATION</scope>
    <source>
        <strain>ATCC 25618 / H37Rv</strain>
    </source>
</reference>
<reference key="8">
    <citation type="journal article" date="2013" name="Acta Crystallogr. F">
        <title>Expression, purification, crystallization and preliminary X-ray crystallographic analysis of the L,D-transpeptidase LdtMt1 from Mycobacterium tuberculosis.</title>
        <authorList>
            <person name="Correale S."/>
            <person name="Ruggiero A."/>
            <person name="Pedone E."/>
            <person name="Berisio R."/>
        </authorList>
    </citation>
    <scope>CRYSTALLIZATION</scope>
    <source>
        <strain>ATCC 25618 / H37Rv</strain>
    </source>
</reference>
<reference key="9">
    <citation type="journal article" date="2013" name="Antimicrob. Agents Chemother.">
        <title>In vitro cross-linking of Mycobacterium tuberculosis peptidoglycan by L,D-transpeptidases and inactivation of these enzymes by carbapenems.</title>
        <authorList>
            <person name="Cordillot M."/>
            <person name="Dubee V."/>
            <person name="Triboulet S."/>
            <person name="Dubost L."/>
            <person name="Marie A."/>
            <person name="Hugonnet J.E."/>
            <person name="Arthur M."/>
            <person name="Mainardi J.L."/>
        </authorList>
    </citation>
    <scope>FUNCTION</scope>
    <scope>CATALYTIC ACTIVITY</scope>
    <scope>SUBSTRATE SPECIFICITY</scope>
    <scope>ACTIVITY REGULATION</scope>
    <source>
        <strain>ATCC 25618 / H37Rv</strain>
    </source>
</reference>
<reference evidence="13 14" key="10">
    <citation type="journal article" date="2013" name="Acta Crystallogr. D">
        <title>Structures of free and inhibited forms of the L,D-transpeptidase LdtMt1 from Mycobacterium tuberculosis.</title>
        <authorList>
            <person name="Correale S."/>
            <person name="Ruggiero A."/>
            <person name="Capparelli R."/>
            <person name="Pedone E."/>
            <person name="Berisio R."/>
        </authorList>
    </citation>
    <scope>X-RAY CRYSTALLOGRAPHY (2.20 ANGSTROMS) OF 32-251 OF APOENZYME AND IN COMPLEX WITH THE CARBAPENEM IMIPENEM</scope>
    <scope>SUBUNIT</scope>
    <scope>DOMAIN</scope>
    <scope>ACTIVE SITE</scope>
    <source>
        <strain>ATCC 25618 / H37Rv</strain>
    </source>
</reference>
<protein>
    <recommendedName>
        <fullName>L,D-transpeptidase 1</fullName>
        <shortName>LDT 1</shortName>
        <ecNumber>2.3.2.-</ecNumber>
    </recommendedName>
    <alternativeName>
        <fullName>Ldt(Mt1)</fullName>
    </alternativeName>
</protein>
<organism>
    <name type="scientific">Mycobacterium tuberculosis (strain ATCC 25618 / H37Rv)</name>
    <dbReference type="NCBI Taxonomy" id="83332"/>
    <lineage>
        <taxon>Bacteria</taxon>
        <taxon>Bacillati</taxon>
        <taxon>Actinomycetota</taxon>
        <taxon>Actinomycetes</taxon>
        <taxon>Mycobacteriales</taxon>
        <taxon>Mycobacteriaceae</taxon>
        <taxon>Mycobacterium</taxon>
        <taxon>Mycobacterium tuberculosis complex</taxon>
    </lineage>
</organism>
<gene>
    <name type="primary">ldtA</name>
    <name type="ordered locus">Rv0116c</name>
    <name type="ordered locus">RVBD_0116c</name>
    <name type="ORF">P425_00122</name>
</gene>
<accession>O53638</accession>
<accession>F2GLR2</accession>
<accession>I6X8J8</accession>
<accession>L0T5Q5</accession>
<comment type="function">
    <text evidence="5 8">Generates 3-&gt;3 cross-links in peptidoglycan, catalyzing the cleavage of the mDap(3)-D-Ala(4) bond of a tetrapeptide donor stem and the formation of a bond between the carbonyl of mDap(3) of the donor stem and the side chain of mDap(3) of the acceptor stem. Is specific for donor substrates containing a stem tetrapeptide since it cannot use pentapeptide stems. Is thought to play a role in adaptation to the nonreplicative state of M.tuberculosis.</text>
</comment>
<comment type="activity regulation">
    <text evidence="5 6 8">Is irreversibly inactivated by the beta-lactams carbapenems via the formation of a covalent adduct resulting from acylation of the catalytic Cys; ertapenem and imipenem are the most efficient drugs for in vitro LdtMt1 inactivation. Cephalosporins (cefotaxime, cephalothin, and ceftriaxone) also form covalent adducts with LdtMt1, although the acylation reaction was 7- to 1,000-fold slower and leads to elimination of one of the drug side chains. A high drug concentration (360 uM) of ceftriaxone is required for full inhibition of enzyme activity. Is not inhibited by ampicillin.</text>
</comment>
<comment type="pathway">
    <text>Cell wall biogenesis; peptidoglycan biosynthesis.</text>
</comment>
<comment type="subunit">
    <text evidence="7">Monomer.</text>
</comment>
<comment type="subcellular location">
    <subcellularLocation>
        <location evidence="10">Periplasm</location>
    </subcellularLocation>
</comment>
<comment type="induction">
    <text evidence="4">Up-regulated 17-fold under nutrient starvation.</text>
</comment>
<comment type="domain">
    <text evidence="7">Consists of two domains connected by a short loop, which form a bent shape. The N-terminal domain (residues 32-122) resembles a c-type immunoglobulin (Ig) domain, and the C-terminal contains the catalytic site that is located in a tiny tunnel.</text>
</comment>
<comment type="miscellaneous">
    <text evidence="11">The peptidoglycan structure of stationary-phase M.tuberculosis is atypical since it contains a majority (80%) of 3-&gt;3 cross-links synthesized by L,D-transpeptidases that predominate over the 4-&gt;3 cross-links formed by the D,D-transpeptidase activity of classical penicillin-binding proteins (PubMed:18408028). In fact, 3-3 cross-linkages predominate throughout all growth phases and the ratio of 4-3/3-3 linkages does not vary significantly under any growth condition (PubMed:22906310).</text>
</comment>
<evidence type="ECO:0000250" key="1"/>
<evidence type="ECO:0000255" key="2"/>
<evidence type="ECO:0000255" key="3">
    <source>
        <dbReference type="PROSITE-ProRule" id="PRU01373"/>
    </source>
</evidence>
<evidence type="ECO:0000269" key="4">
    <source>
    </source>
</evidence>
<evidence type="ECO:0000269" key="5">
    <source>
    </source>
</evidence>
<evidence type="ECO:0000269" key="6">
    <source>
    </source>
</evidence>
<evidence type="ECO:0000269" key="7">
    <source>
    </source>
</evidence>
<evidence type="ECO:0000269" key="8">
    <source>
    </source>
</evidence>
<evidence type="ECO:0000269" key="9">
    <source ref="2"/>
</evidence>
<evidence type="ECO:0000305" key="10"/>
<evidence type="ECO:0000305" key="11">
    <source>
    </source>
</evidence>
<evidence type="ECO:0000305" key="12">
    <source>
    </source>
</evidence>
<evidence type="ECO:0007744" key="13">
    <source>
        <dbReference type="PDB" id="4JMN"/>
    </source>
</evidence>
<evidence type="ECO:0007744" key="14">
    <source>
        <dbReference type="PDB" id="4JMX"/>
    </source>
</evidence>
<evidence type="ECO:0007829" key="15">
    <source>
        <dbReference type="PDB" id="4JMN"/>
    </source>
</evidence>
<evidence type="ECO:0007829" key="16">
    <source>
        <dbReference type="PDB" id="4JMX"/>
    </source>
</evidence>
<evidence type="ECO:0007829" key="17">
    <source>
        <dbReference type="PDB" id="5E5L"/>
    </source>
</evidence>
<proteinExistence type="evidence at protein level"/>
<dbReference type="EC" id="2.3.2.-"/>
<dbReference type="EMBL" id="CP003248">
    <property type="protein sequence ID" value="AFN47964.1"/>
    <property type="molecule type" value="Genomic_DNA"/>
</dbReference>
<dbReference type="EMBL" id="AL123456">
    <property type="protein sequence ID" value="CCP42841.1"/>
    <property type="molecule type" value="Genomic_DNA"/>
</dbReference>
<dbReference type="EMBL" id="JLDD01000001">
    <property type="protein sequence ID" value="KBJ41222.1"/>
    <property type="molecule type" value="Genomic_DNA"/>
</dbReference>
<dbReference type="RefSeq" id="NP_214630.1">
    <property type="nucleotide sequence ID" value="NC_000962.3"/>
</dbReference>
<dbReference type="PDB" id="4JMN">
    <property type="method" value="X-ray"/>
    <property type="resolution" value="2.20 A"/>
    <property type="chains" value="A=32-251"/>
</dbReference>
<dbReference type="PDB" id="4JMX">
    <property type="method" value="X-ray"/>
    <property type="resolution" value="2.55 A"/>
    <property type="chains" value="A=32-251"/>
</dbReference>
<dbReference type="PDB" id="5E51">
    <property type="method" value="X-ray"/>
    <property type="resolution" value="2.25 A"/>
    <property type="chains" value="A/B/C/D=32-251"/>
</dbReference>
<dbReference type="PDB" id="5E5L">
    <property type="method" value="X-ray"/>
    <property type="resolution" value="1.89 A"/>
    <property type="chains" value="A/B/C/D=32-251"/>
</dbReference>
<dbReference type="PDBsum" id="4JMN"/>
<dbReference type="PDBsum" id="4JMX"/>
<dbReference type="PDBsum" id="5E51"/>
<dbReference type="PDBsum" id="5E5L"/>
<dbReference type="SMR" id="O53638"/>
<dbReference type="STRING" id="83332.Rv0116c"/>
<dbReference type="PaxDb" id="83332-Rv0116c"/>
<dbReference type="DNASU" id="886900"/>
<dbReference type="GeneID" id="886900"/>
<dbReference type="KEGG" id="mtu:Rv0116c"/>
<dbReference type="KEGG" id="mtv:RVBD_0116c"/>
<dbReference type="TubercuList" id="Rv0116c"/>
<dbReference type="eggNOG" id="COG1376">
    <property type="taxonomic scope" value="Bacteria"/>
</dbReference>
<dbReference type="InParanoid" id="O53638"/>
<dbReference type="OrthoDB" id="5242354at2"/>
<dbReference type="PhylomeDB" id="O53638"/>
<dbReference type="BioCyc" id="MetaCyc:G185E-4233-MONOMER"/>
<dbReference type="UniPathway" id="UPA00219"/>
<dbReference type="EvolutionaryTrace" id="O53638"/>
<dbReference type="Proteomes" id="UP000001584">
    <property type="component" value="Chromosome"/>
</dbReference>
<dbReference type="GO" id="GO:0005576">
    <property type="term" value="C:extracellular region"/>
    <property type="evidence" value="ECO:0007005"/>
    <property type="project" value="MTBBASE"/>
</dbReference>
<dbReference type="GO" id="GO:0042597">
    <property type="term" value="C:periplasmic space"/>
    <property type="evidence" value="ECO:0007669"/>
    <property type="project" value="UniProtKB-SubCell"/>
</dbReference>
<dbReference type="GO" id="GO:0016746">
    <property type="term" value="F:acyltransferase activity"/>
    <property type="evidence" value="ECO:0007669"/>
    <property type="project" value="UniProtKB-KW"/>
</dbReference>
<dbReference type="GO" id="GO:0071972">
    <property type="term" value="F:peptidoglycan L,D-transpeptidase activity"/>
    <property type="evidence" value="ECO:0000314"/>
    <property type="project" value="MTBBASE"/>
</dbReference>
<dbReference type="GO" id="GO:0071555">
    <property type="term" value="P:cell wall organization"/>
    <property type="evidence" value="ECO:0007669"/>
    <property type="project" value="UniProtKB-KW"/>
</dbReference>
<dbReference type="GO" id="GO:0018104">
    <property type="term" value="P:peptidoglycan-protein cross-linking"/>
    <property type="evidence" value="ECO:0000314"/>
    <property type="project" value="MTBBASE"/>
</dbReference>
<dbReference type="GO" id="GO:0008360">
    <property type="term" value="P:regulation of cell shape"/>
    <property type="evidence" value="ECO:0007669"/>
    <property type="project" value="UniProtKB-KW"/>
</dbReference>
<dbReference type="CDD" id="cd16913">
    <property type="entry name" value="YkuD_like"/>
    <property type="match status" value="1"/>
</dbReference>
<dbReference type="FunFam" id="2.40.440.10:FF:000008">
    <property type="entry name" value="L,D-transpeptidase 1"/>
    <property type="match status" value="1"/>
</dbReference>
<dbReference type="Gene3D" id="2.60.40.3710">
    <property type="match status" value="1"/>
</dbReference>
<dbReference type="Gene3D" id="2.40.440.10">
    <property type="entry name" value="L,D-transpeptidase catalytic domain-like"/>
    <property type="match status" value="1"/>
</dbReference>
<dbReference type="InterPro" id="IPR041280">
    <property type="entry name" value="Big_10"/>
</dbReference>
<dbReference type="InterPro" id="IPR050979">
    <property type="entry name" value="LD-transpeptidase"/>
</dbReference>
<dbReference type="InterPro" id="IPR005490">
    <property type="entry name" value="LD_TPept_cat_dom"/>
</dbReference>
<dbReference type="InterPro" id="IPR038063">
    <property type="entry name" value="Transpep_catalytic_dom"/>
</dbReference>
<dbReference type="PANTHER" id="PTHR30582">
    <property type="entry name" value="L,D-TRANSPEPTIDASE"/>
    <property type="match status" value="1"/>
</dbReference>
<dbReference type="PANTHER" id="PTHR30582:SF2">
    <property type="entry name" value="L,D-TRANSPEPTIDASE YCIB-RELATED"/>
    <property type="match status" value="1"/>
</dbReference>
<dbReference type="Pfam" id="PF17964">
    <property type="entry name" value="Big_10"/>
    <property type="match status" value="1"/>
</dbReference>
<dbReference type="Pfam" id="PF03734">
    <property type="entry name" value="YkuD"/>
    <property type="match status" value="1"/>
</dbReference>
<dbReference type="SUPFAM" id="SSF141523">
    <property type="entry name" value="L,D-transpeptidase catalytic domain-like"/>
    <property type="match status" value="1"/>
</dbReference>
<dbReference type="PROSITE" id="PS52029">
    <property type="entry name" value="LD_TPASE"/>
    <property type="match status" value="1"/>
</dbReference>
<keyword id="KW-0002">3D-structure</keyword>
<keyword id="KW-0012">Acyltransferase</keyword>
<keyword id="KW-0133">Cell shape</keyword>
<keyword id="KW-0961">Cell wall biogenesis/degradation</keyword>
<keyword id="KW-0573">Peptidoglycan synthesis</keyword>
<keyword id="KW-0574">Periplasm</keyword>
<keyword id="KW-1185">Reference proteome</keyword>
<keyword id="KW-0732">Signal</keyword>
<keyword id="KW-0808">Transferase</keyword>